<sequence>MSASELATSYSALILADEGIEITSDKLLSLTKAANVDVEPIWATIFAKALEGKDLKELLLNIGSGAGAAPVAGGAAAPAAADGEAPAEEKEEAKEEEESDEDMGFGLFD</sequence>
<accession>P17476</accession>
<name>RLA1_SCHPO</name>
<organism>
    <name type="scientific">Schizosaccharomyces pombe (strain 972 / ATCC 24843)</name>
    <name type="common">Fission yeast</name>
    <dbReference type="NCBI Taxonomy" id="284812"/>
    <lineage>
        <taxon>Eukaryota</taxon>
        <taxon>Fungi</taxon>
        <taxon>Dikarya</taxon>
        <taxon>Ascomycota</taxon>
        <taxon>Taphrinomycotina</taxon>
        <taxon>Schizosaccharomycetes</taxon>
        <taxon>Schizosaccharomycetales</taxon>
        <taxon>Schizosaccharomycetaceae</taxon>
        <taxon>Schizosaccharomyces</taxon>
    </lineage>
</organism>
<gene>
    <name type="primary">rpp101</name>
    <name type="synonym">rpa1</name>
    <name type="ORF">SPAC644.15</name>
</gene>
<proteinExistence type="inferred from homology"/>
<evidence type="ECO:0000250" key="1">
    <source>
        <dbReference type="UniProtKB" id="P05318"/>
    </source>
</evidence>
<evidence type="ECO:0000256" key="2">
    <source>
        <dbReference type="SAM" id="MobiDB-lite"/>
    </source>
</evidence>
<evidence type="ECO:0000269" key="3">
    <source>
    </source>
</evidence>
<evidence type="ECO:0000305" key="4"/>
<reference key="1">
    <citation type="journal article" date="1990" name="Mol. Cell. Biol.">
        <title>A gene family for acidic ribosomal proteins in Schizosaccharomyces pombe: two essential and two nonessential genes.</title>
        <authorList>
            <person name="Beltrame M."/>
            <person name="Bianchi M.E."/>
        </authorList>
    </citation>
    <scope>NUCLEOTIDE SEQUENCE [GENOMIC DNA]</scope>
</reference>
<reference key="2">
    <citation type="journal article" date="1994" name="Gene">
        <title>Cloning and sequence analysis of rhp51+, a Schizosaccharomyces pombe homolog of the Saccharomyces cerevisiae RAD51 gene.</title>
        <authorList>
            <person name="Jang Y.K."/>
            <person name="Jin Y.H."/>
            <person name="Kim E.M."/>
            <person name="Hong S.H."/>
            <person name="Fabre F."/>
            <person name="Park S.D."/>
        </authorList>
    </citation>
    <scope>NUCLEOTIDE SEQUENCE [GENOMIC DNA]</scope>
</reference>
<reference key="3">
    <citation type="journal article" date="2002" name="Nature">
        <title>The genome sequence of Schizosaccharomyces pombe.</title>
        <authorList>
            <person name="Wood V."/>
            <person name="Gwilliam R."/>
            <person name="Rajandream M.A."/>
            <person name="Lyne M.H."/>
            <person name="Lyne R."/>
            <person name="Stewart A."/>
            <person name="Sgouros J.G."/>
            <person name="Peat N."/>
            <person name="Hayles J."/>
            <person name="Baker S.G."/>
            <person name="Basham D."/>
            <person name="Bowman S."/>
            <person name="Brooks K."/>
            <person name="Brown D."/>
            <person name="Brown S."/>
            <person name="Chillingworth T."/>
            <person name="Churcher C.M."/>
            <person name="Collins M."/>
            <person name="Connor R."/>
            <person name="Cronin A."/>
            <person name="Davis P."/>
            <person name="Feltwell T."/>
            <person name="Fraser A."/>
            <person name="Gentles S."/>
            <person name="Goble A."/>
            <person name="Hamlin N."/>
            <person name="Harris D.E."/>
            <person name="Hidalgo J."/>
            <person name="Hodgson G."/>
            <person name="Holroyd S."/>
            <person name="Hornsby T."/>
            <person name="Howarth S."/>
            <person name="Huckle E.J."/>
            <person name="Hunt S."/>
            <person name="Jagels K."/>
            <person name="James K.D."/>
            <person name="Jones L."/>
            <person name="Jones M."/>
            <person name="Leather S."/>
            <person name="McDonald S."/>
            <person name="McLean J."/>
            <person name="Mooney P."/>
            <person name="Moule S."/>
            <person name="Mungall K.L."/>
            <person name="Murphy L.D."/>
            <person name="Niblett D."/>
            <person name="Odell C."/>
            <person name="Oliver K."/>
            <person name="O'Neil S."/>
            <person name="Pearson D."/>
            <person name="Quail M.A."/>
            <person name="Rabbinowitsch E."/>
            <person name="Rutherford K.M."/>
            <person name="Rutter S."/>
            <person name="Saunders D."/>
            <person name="Seeger K."/>
            <person name="Sharp S."/>
            <person name="Skelton J."/>
            <person name="Simmonds M.N."/>
            <person name="Squares R."/>
            <person name="Squares S."/>
            <person name="Stevens K."/>
            <person name="Taylor K."/>
            <person name="Taylor R.G."/>
            <person name="Tivey A."/>
            <person name="Walsh S.V."/>
            <person name="Warren T."/>
            <person name="Whitehead S."/>
            <person name="Woodward J.R."/>
            <person name="Volckaert G."/>
            <person name="Aert R."/>
            <person name="Robben J."/>
            <person name="Grymonprez B."/>
            <person name="Weltjens I."/>
            <person name="Vanstreels E."/>
            <person name="Rieger M."/>
            <person name="Schaefer M."/>
            <person name="Mueller-Auer S."/>
            <person name="Gabel C."/>
            <person name="Fuchs M."/>
            <person name="Duesterhoeft A."/>
            <person name="Fritzc C."/>
            <person name="Holzer E."/>
            <person name="Moestl D."/>
            <person name="Hilbert H."/>
            <person name="Borzym K."/>
            <person name="Langer I."/>
            <person name="Beck A."/>
            <person name="Lehrach H."/>
            <person name="Reinhardt R."/>
            <person name="Pohl T.M."/>
            <person name="Eger P."/>
            <person name="Zimmermann W."/>
            <person name="Wedler H."/>
            <person name="Wambutt R."/>
            <person name="Purnelle B."/>
            <person name="Goffeau A."/>
            <person name="Cadieu E."/>
            <person name="Dreano S."/>
            <person name="Gloux S."/>
            <person name="Lelaure V."/>
            <person name="Mottier S."/>
            <person name="Galibert F."/>
            <person name="Aves S.J."/>
            <person name="Xiang Z."/>
            <person name="Hunt C."/>
            <person name="Moore K."/>
            <person name="Hurst S.M."/>
            <person name="Lucas M."/>
            <person name="Rochet M."/>
            <person name="Gaillardin C."/>
            <person name="Tallada V.A."/>
            <person name="Garzon A."/>
            <person name="Thode G."/>
            <person name="Daga R.R."/>
            <person name="Cruzado L."/>
            <person name="Jimenez J."/>
            <person name="Sanchez M."/>
            <person name="del Rey F."/>
            <person name="Benito J."/>
            <person name="Dominguez A."/>
            <person name="Revuelta J.L."/>
            <person name="Moreno S."/>
            <person name="Armstrong J."/>
            <person name="Forsburg S.L."/>
            <person name="Cerutti L."/>
            <person name="Lowe T."/>
            <person name="McCombie W.R."/>
            <person name="Paulsen I."/>
            <person name="Potashkin J."/>
            <person name="Shpakovski G.V."/>
            <person name="Ussery D."/>
            <person name="Barrell B.G."/>
            <person name="Nurse P."/>
        </authorList>
    </citation>
    <scope>NUCLEOTIDE SEQUENCE [LARGE SCALE GENOMIC DNA]</scope>
    <source>
        <strain>972 / ATCC 24843</strain>
    </source>
</reference>
<reference key="4">
    <citation type="journal article" date="1993" name="Nucleic Acids Res.">
        <title>Cloning the RAD51 homologue of Schizosaccharomyces pombe.</title>
        <authorList>
            <person name="Muris D.F.R."/>
            <person name="Vreeken K."/>
            <person name="Carr A.M."/>
            <person name="Broughton B.C."/>
            <person name="Lehmann A.R."/>
            <person name="Lohman P.H.M."/>
            <person name="Pastink A."/>
        </authorList>
    </citation>
    <scope>NUCLEOTIDE SEQUENCE [GENOMIC DNA] OF 1-24</scope>
</reference>
<reference key="5">
    <citation type="journal article" date="2006" name="Nat. Biotechnol.">
        <title>ORFeome cloning and global analysis of protein localization in the fission yeast Schizosaccharomyces pombe.</title>
        <authorList>
            <person name="Matsuyama A."/>
            <person name="Arai R."/>
            <person name="Yashiroda Y."/>
            <person name="Shirai A."/>
            <person name="Kamata A."/>
            <person name="Sekido S."/>
            <person name="Kobayashi Y."/>
            <person name="Hashimoto A."/>
            <person name="Hamamoto M."/>
            <person name="Hiraoka Y."/>
            <person name="Horinouchi S."/>
            <person name="Yoshida M."/>
        </authorList>
    </citation>
    <scope>SUBCELLULAR LOCATION [LARGE SCALE ANALYSIS]</scope>
</reference>
<dbReference type="EMBL" id="M33137">
    <property type="protein sequence ID" value="AAA35334.1"/>
    <property type="molecule type" value="Genomic_DNA"/>
</dbReference>
<dbReference type="EMBL" id="Z24756">
    <property type="protein sequence ID" value="CAA80880.2"/>
    <property type="status" value="ALT_SEQ"/>
    <property type="molecule type" value="Genomic_DNA"/>
</dbReference>
<dbReference type="EMBL" id="CU329670">
    <property type="protein sequence ID" value="CAB90142.1"/>
    <property type="molecule type" value="Genomic_DNA"/>
</dbReference>
<dbReference type="EMBL" id="Z22691">
    <property type="protein sequence ID" value="CAA80400.1"/>
    <property type="molecule type" value="Genomic_DNA"/>
</dbReference>
<dbReference type="PIR" id="A34715">
    <property type="entry name" value="R6BY11"/>
</dbReference>
<dbReference type="RefSeq" id="NP_593883.1">
    <property type="nucleotide sequence ID" value="NM_001019313.2"/>
</dbReference>
<dbReference type="SMR" id="P17476"/>
<dbReference type="BioGRID" id="279645">
    <property type="interactions" value="2"/>
</dbReference>
<dbReference type="FunCoup" id="P17476">
    <property type="interactions" value="338"/>
</dbReference>
<dbReference type="STRING" id="284812.P17476"/>
<dbReference type="iPTMnet" id="P17476"/>
<dbReference type="PaxDb" id="4896-SPAC644.15.1"/>
<dbReference type="EnsemblFungi" id="SPAC644.15.1">
    <property type="protein sequence ID" value="SPAC644.15.1:pep"/>
    <property type="gene ID" value="SPAC644.15"/>
</dbReference>
<dbReference type="GeneID" id="2543217"/>
<dbReference type="KEGG" id="spo:2543217"/>
<dbReference type="PomBase" id="SPAC644.15">
    <property type="gene designation" value="rpp101"/>
</dbReference>
<dbReference type="VEuPathDB" id="FungiDB:SPAC644.15"/>
<dbReference type="eggNOG" id="KOG1762">
    <property type="taxonomic scope" value="Eukaryota"/>
</dbReference>
<dbReference type="HOGENOM" id="CLU_114656_1_0_1"/>
<dbReference type="InParanoid" id="P17476"/>
<dbReference type="OMA" id="CCINSHY"/>
<dbReference type="PhylomeDB" id="P17476"/>
<dbReference type="PRO" id="PR:P17476"/>
<dbReference type="Proteomes" id="UP000002485">
    <property type="component" value="Chromosome I"/>
</dbReference>
<dbReference type="GO" id="GO:0005829">
    <property type="term" value="C:cytosol"/>
    <property type="evidence" value="ECO:0007005"/>
    <property type="project" value="PomBase"/>
</dbReference>
<dbReference type="GO" id="GO:0022625">
    <property type="term" value="C:cytosolic large ribosomal subunit"/>
    <property type="evidence" value="ECO:0000318"/>
    <property type="project" value="GO_Central"/>
</dbReference>
<dbReference type="GO" id="GO:0030295">
    <property type="term" value="F:protein kinase activator activity"/>
    <property type="evidence" value="ECO:0000318"/>
    <property type="project" value="GO_Central"/>
</dbReference>
<dbReference type="GO" id="GO:0043021">
    <property type="term" value="F:ribonucleoprotein complex binding"/>
    <property type="evidence" value="ECO:0000318"/>
    <property type="project" value="GO_Central"/>
</dbReference>
<dbReference type="GO" id="GO:0003735">
    <property type="term" value="F:structural constituent of ribosome"/>
    <property type="evidence" value="ECO:0000318"/>
    <property type="project" value="GO_Central"/>
</dbReference>
<dbReference type="GO" id="GO:0002181">
    <property type="term" value="P:cytoplasmic translation"/>
    <property type="evidence" value="ECO:0000318"/>
    <property type="project" value="GO_Central"/>
</dbReference>
<dbReference type="GO" id="GO:0002182">
    <property type="term" value="P:cytoplasmic translational elongation"/>
    <property type="evidence" value="ECO:0000266"/>
    <property type="project" value="PomBase"/>
</dbReference>
<dbReference type="CDD" id="cd05831">
    <property type="entry name" value="Ribosomal_P1"/>
    <property type="match status" value="1"/>
</dbReference>
<dbReference type="FunFam" id="1.10.10.1410:FF:000001">
    <property type="entry name" value="60S acidic ribosomal protein P1"/>
    <property type="match status" value="1"/>
</dbReference>
<dbReference type="Gene3D" id="1.10.10.1410">
    <property type="match status" value="1"/>
</dbReference>
<dbReference type="HAMAP" id="MF_01478">
    <property type="entry name" value="Ribosomal_L12_arch"/>
    <property type="match status" value="1"/>
</dbReference>
<dbReference type="InterPro" id="IPR038716">
    <property type="entry name" value="P1/P2_N_sf"/>
</dbReference>
<dbReference type="InterPro" id="IPR027534">
    <property type="entry name" value="Ribosomal_P1/P2"/>
</dbReference>
<dbReference type="PANTHER" id="PTHR45696">
    <property type="entry name" value="60S ACIDIC RIBOSOMAL PROTEIN P1"/>
    <property type="match status" value="1"/>
</dbReference>
<dbReference type="PANTHER" id="PTHR45696:SF10">
    <property type="entry name" value="LARGE RIBOSOMAL SUBUNIT PROTEIN P1"/>
    <property type="match status" value="1"/>
</dbReference>
<dbReference type="Pfam" id="PF00428">
    <property type="entry name" value="Ribosomal_60s"/>
    <property type="match status" value="1"/>
</dbReference>
<feature type="chain" id="PRO_0000157707" description="Large ribosomal subunit protein P1A">
    <location>
        <begin position="1"/>
        <end position="109"/>
    </location>
</feature>
<feature type="region of interest" description="Disordered" evidence="2">
    <location>
        <begin position="69"/>
        <end position="109"/>
    </location>
</feature>
<feature type="compositionally biased region" description="Low complexity" evidence="2">
    <location>
        <begin position="69"/>
        <end position="84"/>
    </location>
</feature>
<feature type="compositionally biased region" description="Acidic residues" evidence="2">
    <location>
        <begin position="94"/>
        <end position="103"/>
    </location>
</feature>
<feature type="sequence conflict" description="In Ref. 4; CAA80400." evidence="4" ref="4">
    <original>S</original>
    <variation>V</variation>
    <location>
        <position position="24"/>
    </location>
</feature>
<protein>
    <recommendedName>
        <fullName evidence="4">Large ribosomal subunit protein P1A</fullName>
    </recommendedName>
    <alternativeName>
        <fullName>60S acidic ribosomal protein P1-alpha 1</fullName>
        <shortName>A1</shortName>
    </alternativeName>
</protein>
<comment type="function">
    <text evidence="1">Component of the ribosome, a large ribonucleoprotein complex responsible for the synthesis of proteins in the cell. The small ribosomal subunit (SSU) binds messenger RNAs (mRNAs) and translates the encoded message by selecting cognate aminoacyl-transfer RNA (tRNA) molecules. The large subunit (LSU) contains the ribosomal catalytic site termed the peptidyl transferase center (PTC), which catalyzes the formation of peptide bonds, thereby polymerizing the amino acids delivered by tRNAs into a polypeptide chain. The nascent polypeptides leave the ribosome through a tunnel in the LSU and interact with protein factors that function in enzymatic processing, targeting, and the membrane insertion of nascent chains at the exit of the ribosomal tunnel.</text>
</comment>
<comment type="subunit">
    <text evidence="1">Component of the large ribosomal subunit (LSU). Mature yeast ribosomes consist of a small (40S) and a large (60S) subunit. The 40S small subunit contains 1 molecule of ribosomal RNA (18S rRNA) and at least 33 different proteins. The large 60S subunit contains 3 rRNA molecules (25S, 5.8S and 5S rRNA) and at least 46 different proteins. The acidic ribosomal P-proteins form the stalk structure of the 60S subunit. They are organized as a pentameric complex in which uL10/P0 interacts with 2 heterodimers of P1 and P2 proteins.</text>
</comment>
<comment type="subcellular location">
    <subcellularLocation>
        <location evidence="3">Cytoplasm</location>
    </subcellularLocation>
</comment>
<comment type="miscellaneous">
    <text>Yeasts contain 4 individual small ribosomal A proteins (RPA) which can be classified into two couples of similar but not identical sequences. Each couple is distinctly related to one of the two A proteins present in multicellular organisms.</text>
</comment>
<comment type="miscellaneous">
    <text>Rpa3 and rpa4 are essential for cell survival, whereas rpa1 and rpa2 are not.</text>
</comment>
<comment type="similarity">
    <text evidence="4">Belongs to the eukaryotic ribosomal protein P1/P2 family.</text>
</comment>
<keyword id="KW-0963">Cytoplasm</keyword>
<keyword id="KW-0597">Phosphoprotein</keyword>
<keyword id="KW-1185">Reference proteome</keyword>
<keyword id="KW-0687">Ribonucleoprotein</keyword>
<keyword id="KW-0689">Ribosomal protein</keyword>